<protein>
    <recommendedName>
        <fullName evidence="3">3-oxo-tetronate kinase</fullName>
        <ecNumber evidence="2">2.7.1.217</ecNumber>
    </recommendedName>
    <alternativeName>
        <fullName evidence="4">3-dehydrotetronate 4-kinase</fullName>
    </alternativeName>
</protein>
<comment type="function">
    <text evidence="2">Catalyzes the ATP-dependent phosphorylation of 3-oxo-tetronate to 3-oxo-tetronate 4-phosphate.</text>
</comment>
<comment type="catalytic activity">
    <reaction evidence="2">
        <text>3-dehydro-L-erythronate + ATP = 3-dehydro-4-O-phospho-L-erythronate + ADP + H(+)</text>
        <dbReference type="Rhea" id="RHEA:52552"/>
        <dbReference type="ChEBI" id="CHEBI:15378"/>
        <dbReference type="ChEBI" id="CHEBI:30616"/>
        <dbReference type="ChEBI" id="CHEBI:136592"/>
        <dbReference type="ChEBI" id="CHEBI:136670"/>
        <dbReference type="ChEBI" id="CHEBI:456216"/>
        <dbReference type="EC" id="2.7.1.217"/>
    </reaction>
</comment>
<comment type="catalytic activity">
    <reaction evidence="2">
        <text>3-dehydro-D-erythronate + ATP = 3-dehydro-4-O-phospho-D-erythronate + ADP + H(+)</text>
        <dbReference type="Rhea" id="RHEA:52556"/>
        <dbReference type="ChEBI" id="CHEBI:15378"/>
        <dbReference type="ChEBI" id="CHEBI:30616"/>
        <dbReference type="ChEBI" id="CHEBI:57958"/>
        <dbReference type="ChEBI" id="CHEBI:136593"/>
        <dbReference type="ChEBI" id="CHEBI:456216"/>
        <dbReference type="EC" id="2.7.1.217"/>
    </reaction>
</comment>
<comment type="similarity">
    <text evidence="4">Belongs to the four-carbon acid sugar kinase family.</text>
</comment>
<keyword id="KW-0067">ATP-binding</keyword>
<keyword id="KW-0119">Carbohydrate metabolism</keyword>
<keyword id="KW-0418">Kinase</keyword>
<keyword id="KW-0547">Nucleotide-binding</keyword>
<keyword id="KW-1185">Reference proteome</keyword>
<keyword id="KW-0808">Transferase</keyword>
<organism>
    <name type="scientific">Pectobacterium atrosepticum (strain SCRI 1043 / ATCC BAA-672)</name>
    <name type="common">Erwinia carotovora subsp. atroseptica</name>
    <dbReference type="NCBI Taxonomy" id="218491"/>
    <lineage>
        <taxon>Bacteria</taxon>
        <taxon>Pseudomonadati</taxon>
        <taxon>Pseudomonadota</taxon>
        <taxon>Gammaproteobacteria</taxon>
        <taxon>Enterobacterales</taxon>
        <taxon>Pectobacteriaceae</taxon>
        <taxon>Pectobacterium</taxon>
    </lineage>
</organism>
<sequence length="424" mass="45525">MIKLGVIADDFTGATDIASFLVNNGLPTVQLNGVPPSDFKVDTQAVVISLKSRSCSAEQAVADSLNALAWLQQQGCQQFYFKYCSTFDSTAKGNIGPVTDALLEQLGETQTIISPALPVNGRTVYQGHLFVMDQLLSESGMRHHPVTPMTDSNLMRVMEQQAAGQCGLVPYAVMDQGADAVKQRLAQLKEQGMRYVVLDTLNEQHLLTQGEALRDMKLVTGGSGLAIGLARQWADSTKQTSSATEAGKPQSGAGVVLSGSCSVMTNKQVAHYLKQAAGRAIDVARCLESDDAQQSYAQELADWVKAHRDDALAPLLYATSSPDELAQIQQRWGAEASSHAVEKLFAAVARQLQEDGFQRFIIAGGETSSIVVQTLGIHAFHIGPSISPGVPWVRSTTHPLSLALKSGNFGDEDFFARAQKEFAA</sequence>
<accession>Q6CZ25</accession>
<gene>
    <name evidence="3" type="primary">otnK</name>
    <name evidence="5" type="ordered locus">ECA4328</name>
</gene>
<name>OTNK_PECAS</name>
<feature type="chain" id="PRO_0000439683" description="3-oxo-tetronate kinase">
    <location>
        <begin position="1"/>
        <end position="424"/>
    </location>
</feature>
<feature type="binding site" evidence="1">
    <location>
        <position position="260"/>
    </location>
    <ligand>
        <name>ATP</name>
        <dbReference type="ChEBI" id="CHEBI:30616"/>
    </ligand>
</feature>
<feature type="binding site" evidence="1">
    <location>
        <begin position="364"/>
        <end position="367"/>
    </location>
    <ligand>
        <name>ATP</name>
        <dbReference type="ChEBI" id="CHEBI:30616"/>
    </ligand>
</feature>
<feature type="binding site" evidence="1">
    <location>
        <position position="407"/>
    </location>
    <ligand>
        <name>ATP</name>
        <dbReference type="ChEBI" id="CHEBI:30616"/>
    </ligand>
</feature>
<evidence type="ECO:0000250" key="1">
    <source>
        <dbReference type="UniProtKB" id="Q0KBC8"/>
    </source>
</evidence>
<evidence type="ECO:0000269" key="2">
    <source>
    </source>
</evidence>
<evidence type="ECO:0000303" key="3">
    <source>
    </source>
</evidence>
<evidence type="ECO:0000305" key="4"/>
<evidence type="ECO:0000312" key="5">
    <source>
        <dbReference type="EMBL" id="CAG77225.1"/>
    </source>
</evidence>
<dbReference type="EC" id="2.7.1.217" evidence="2"/>
<dbReference type="EMBL" id="BX950851">
    <property type="protein sequence ID" value="CAG77225.1"/>
    <property type="molecule type" value="Genomic_DNA"/>
</dbReference>
<dbReference type="RefSeq" id="WP_011095792.1">
    <property type="nucleotide sequence ID" value="NC_004547.2"/>
</dbReference>
<dbReference type="SMR" id="Q6CZ25"/>
<dbReference type="STRING" id="218491.ECA4328"/>
<dbReference type="KEGG" id="eca:ECA4328"/>
<dbReference type="PATRIC" id="fig|218491.5.peg.4407"/>
<dbReference type="eggNOG" id="COG3395">
    <property type="taxonomic scope" value="Bacteria"/>
</dbReference>
<dbReference type="HOGENOM" id="CLU_029424_1_0_6"/>
<dbReference type="OrthoDB" id="191465at2"/>
<dbReference type="Proteomes" id="UP000007966">
    <property type="component" value="Chromosome"/>
</dbReference>
<dbReference type="GO" id="GO:0005524">
    <property type="term" value="F:ATP binding"/>
    <property type="evidence" value="ECO:0007669"/>
    <property type="project" value="UniProtKB-KW"/>
</dbReference>
<dbReference type="GO" id="GO:0016301">
    <property type="term" value="F:kinase activity"/>
    <property type="evidence" value="ECO:0007669"/>
    <property type="project" value="UniProtKB-KW"/>
</dbReference>
<dbReference type="Gene3D" id="3.40.980.20">
    <property type="entry name" value="Four-carbon acid sugar kinase, nucleotide binding domain"/>
    <property type="match status" value="1"/>
</dbReference>
<dbReference type="Gene3D" id="3.40.50.10840">
    <property type="entry name" value="Putative sugar-binding, N-terminal domain"/>
    <property type="match status" value="1"/>
</dbReference>
<dbReference type="InterPro" id="IPR010737">
    <property type="entry name" value="4-carb_acid_sugar_kinase_N"/>
</dbReference>
<dbReference type="InterPro" id="IPR037051">
    <property type="entry name" value="4-carb_acid_sugar_kinase_N_sf"/>
</dbReference>
<dbReference type="InterPro" id="IPR031475">
    <property type="entry name" value="NBD_C"/>
</dbReference>
<dbReference type="InterPro" id="IPR042213">
    <property type="entry name" value="NBD_C_sf"/>
</dbReference>
<dbReference type="InterPro" id="IPR050007">
    <property type="entry name" value="OtnK"/>
</dbReference>
<dbReference type="NCBIfam" id="NF043035">
    <property type="entry name" value="OxoTetrKin"/>
    <property type="match status" value="1"/>
</dbReference>
<dbReference type="Pfam" id="PF17042">
    <property type="entry name" value="NBD_C"/>
    <property type="match status" value="1"/>
</dbReference>
<dbReference type="Pfam" id="PF07005">
    <property type="entry name" value="SBD_N"/>
    <property type="match status" value="1"/>
</dbReference>
<dbReference type="SUPFAM" id="SSF142764">
    <property type="entry name" value="YgbK-like"/>
    <property type="match status" value="1"/>
</dbReference>
<proteinExistence type="evidence at protein level"/>
<reference key="1">
    <citation type="journal article" date="2004" name="Proc. Natl. Acad. Sci. U.S.A.">
        <title>Genome sequence of the enterobacterial phytopathogen Erwinia carotovora subsp. atroseptica and characterization of virulence factors.</title>
        <authorList>
            <person name="Bell K.S."/>
            <person name="Sebaihia M."/>
            <person name="Pritchard L."/>
            <person name="Holden M.T.G."/>
            <person name="Hyman L.J."/>
            <person name="Holeva M.C."/>
            <person name="Thomson N.R."/>
            <person name="Bentley S.D."/>
            <person name="Churcher L.J.C."/>
            <person name="Mungall K."/>
            <person name="Atkin R."/>
            <person name="Bason N."/>
            <person name="Brooks K."/>
            <person name="Chillingworth T."/>
            <person name="Clark K."/>
            <person name="Doggett J."/>
            <person name="Fraser A."/>
            <person name="Hance Z."/>
            <person name="Hauser H."/>
            <person name="Jagels K."/>
            <person name="Moule S."/>
            <person name="Norbertczak H."/>
            <person name="Ormond D."/>
            <person name="Price C."/>
            <person name="Quail M.A."/>
            <person name="Sanders M."/>
            <person name="Walker D."/>
            <person name="Whitehead S."/>
            <person name="Salmond G.P.C."/>
            <person name="Birch P.R.J."/>
            <person name="Parkhill J."/>
            <person name="Toth I.K."/>
        </authorList>
    </citation>
    <scope>NUCLEOTIDE SEQUENCE [LARGE SCALE GENOMIC DNA]</scope>
    <source>
        <strain>SCRI 1043 / ATCC BAA-672</strain>
    </source>
</reference>
<reference key="2">
    <citation type="journal article" date="2016" name="Proc. Natl. Acad. Sci. U.S.A.">
        <title>Assignment of function to a domain of unknown function: DUF1537 is a new kinase family in catabolic pathways for acid sugars.</title>
        <authorList>
            <person name="Zhang X."/>
            <person name="Carter M.S."/>
            <person name="Vetting M.W."/>
            <person name="San Francisco B."/>
            <person name="Zhao S."/>
            <person name="Al-Obaidi N.F."/>
            <person name="Solbiati J.O."/>
            <person name="Thiaville J.J."/>
            <person name="de Crecy-Lagard V."/>
            <person name="Jacobson M.P."/>
            <person name="Almo S.C."/>
            <person name="Gerlt J.A."/>
        </authorList>
    </citation>
    <scope>FUNCTION</scope>
    <scope>CATALYTIC ACTIVITY</scope>
    <source>
        <strain>SCRI 1043 / ATCC BAA-672</strain>
    </source>
</reference>